<proteinExistence type="evidence at transcript level"/>
<keyword id="KW-0067">ATP-binding</keyword>
<keyword id="KW-0106">Calcium</keyword>
<keyword id="KW-0109">Calcium transport</keyword>
<keyword id="KW-0112">Calmodulin-binding</keyword>
<keyword id="KW-1003">Cell membrane</keyword>
<keyword id="KW-0406">Ion transport</keyword>
<keyword id="KW-0460">Magnesium</keyword>
<keyword id="KW-0472">Membrane</keyword>
<keyword id="KW-0479">Metal-binding</keyword>
<keyword id="KW-0547">Nucleotide-binding</keyword>
<keyword id="KW-0597">Phosphoprotein</keyword>
<keyword id="KW-1185">Reference proteome</keyword>
<keyword id="KW-1278">Translocase</keyword>
<keyword id="KW-0812">Transmembrane</keyword>
<keyword id="KW-1133">Transmembrane helix</keyword>
<keyword id="KW-0813">Transport</keyword>
<protein>
    <recommendedName>
        <fullName evidence="3">Plasma membrane calcium-transporting ATPase 1</fullName>
        <ecNumber evidence="2">7.2.2.10</ecNumber>
    </recommendedName>
    <alternativeName>
        <fullName evidence="3">Plasma membrane calcium ATPase isoform 1</fullName>
        <shortName evidence="3">PMCA1</shortName>
    </alternativeName>
    <alternativeName>
        <fullName>Plasma membrane calcium pump isoform 1</fullName>
    </alternativeName>
</protein>
<organism evidence="9">
    <name type="scientific">Gallus gallus</name>
    <name type="common">Chicken</name>
    <dbReference type="NCBI Taxonomy" id="9031"/>
    <lineage>
        <taxon>Eukaryota</taxon>
        <taxon>Metazoa</taxon>
        <taxon>Chordata</taxon>
        <taxon>Craniata</taxon>
        <taxon>Vertebrata</taxon>
        <taxon>Euteleostomi</taxon>
        <taxon>Archelosauria</taxon>
        <taxon>Archosauria</taxon>
        <taxon>Dinosauria</taxon>
        <taxon>Saurischia</taxon>
        <taxon>Theropoda</taxon>
        <taxon>Coelurosauria</taxon>
        <taxon>Aves</taxon>
        <taxon>Neognathae</taxon>
        <taxon>Galloanserae</taxon>
        <taxon>Galliformes</taxon>
        <taxon>Phasianidae</taxon>
        <taxon>Phasianinae</taxon>
        <taxon>Gallus</taxon>
    </lineage>
</organism>
<feature type="initiator methionine" description="Removed" evidence="3">
    <location>
        <position position="1"/>
    </location>
</feature>
<feature type="chain" id="PRO_0000046213" description="Plasma membrane calcium-transporting ATPase 1">
    <location>
        <begin position="2"/>
        <end position="1205"/>
    </location>
</feature>
<feature type="topological domain" description="Cytoplasmic" evidence="8">
    <location>
        <begin position="2"/>
        <end position="104"/>
    </location>
</feature>
<feature type="transmembrane region" description="Helical" evidence="3">
    <location>
        <begin position="105"/>
        <end position="125"/>
    </location>
</feature>
<feature type="topological domain" description="Extracellular" evidence="8">
    <location>
        <begin position="126"/>
        <end position="153"/>
    </location>
</feature>
<feature type="transmembrane region" description="Helical" evidence="3">
    <location>
        <begin position="154"/>
        <end position="174"/>
    </location>
</feature>
<feature type="topological domain" description="Cytoplasmic" evidence="8">
    <location>
        <begin position="175"/>
        <end position="351"/>
    </location>
</feature>
<feature type="transmembrane region" description="Helical" evidence="3">
    <location>
        <begin position="352"/>
        <end position="371"/>
    </location>
</feature>
<feature type="topological domain" description="Extracellular" evidence="8">
    <location>
        <begin position="372"/>
        <end position="403"/>
    </location>
</feature>
<feature type="transmembrane region" description="Helical" evidence="5">
    <location>
        <begin position="404"/>
        <end position="424"/>
    </location>
</feature>
<feature type="topological domain" description="Cytoplasmic" evidence="8">
    <location>
        <begin position="425"/>
        <end position="840"/>
    </location>
</feature>
<feature type="transmembrane region" description="Helical" evidence="5">
    <location>
        <begin position="841"/>
        <end position="861"/>
    </location>
</feature>
<feature type="topological domain" description="Extracellular" evidence="8">
    <location>
        <begin position="862"/>
        <end position="868"/>
    </location>
</feature>
<feature type="transmembrane region" description="Helical" evidence="5">
    <location>
        <begin position="869"/>
        <end position="889"/>
    </location>
</feature>
<feature type="topological domain" description="Cytoplasmic" evidence="8">
    <location>
        <begin position="890"/>
        <end position="912"/>
    </location>
</feature>
<feature type="transmembrane region" description="Helical" evidence="3">
    <location>
        <begin position="913"/>
        <end position="933"/>
    </location>
</feature>
<feature type="topological domain" description="Extracellular" evidence="8">
    <location>
        <begin position="934"/>
        <end position="956"/>
    </location>
</feature>
<feature type="transmembrane region" description="Helical" evidence="3">
    <location>
        <begin position="957"/>
        <end position="976"/>
    </location>
</feature>
<feature type="topological domain" description="Cytoplasmic" evidence="8">
    <location>
        <begin position="977"/>
        <end position="990"/>
    </location>
</feature>
<feature type="transmembrane region" description="Helical" evidence="3">
    <location>
        <begin position="991"/>
        <end position="1012"/>
    </location>
</feature>
<feature type="topological domain" description="Extracellular" evidence="8">
    <location>
        <begin position="1013"/>
        <end position="1024"/>
    </location>
</feature>
<feature type="transmembrane region" description="Helical" evidence="3">
    <location>
        <begin position="1025"/>
        <end position="1045"/>
    </location>
</feature>
<feature type="topological domain" description="Cytoplasmic" evidence="8">
    <location>
        <begin position="1046"/>
        <end position="1205"/>
    </location>
</feature>
<feature type="region of interest" description="Calmodulin-binding subdomain A" evidence="1">
    <location>
        <begin position="94"/>
        <end position="111"/>
    </location>
</feature>
<feature type="region of interest" description="Disordered" evidence="6">
    <location>
        <begin position="296"/>
        <end position="343"/>
    </location>
</feature>
<feature type="region of interest" description="Disordered" evidence="6">
    <location>
        <begin position="1145"/>
        <end position="1205"/>
    </location>
</feature>
<feature type="compositionally biased region" description="Basic and acidic residues" evidence="6">
    <location>
        <begin position="300"/>
        <end position="310"/>
    </location>
</feature>
<feature type="compositionally biased region" description="Basic and acidic residues" evidence="6">
    <location>
        <begin position="322"/>
        <end position="343"/>
    </location>
</feature>
<feature type="compositionally biased region" description="Polar residues" evidence="6">
    <location>
        <begin position="1183"/>
        <end position="1205"/>
    </location>
</feature>
<feature type="active site" description="4-aspartylphosphate intermediate" evidence="4">
    <location>
        <position position="460"/>
    </location>
</feature>
<feature type="binding site" evidence="4">
    <location>
        <position position="460"/>
    </location>
    <ligand>
        <name>Mg(2+)</name>
        <dbReference type="ChEBI" id="CHEBI:18420"/>
    </ligand>
</feature>
<feature type="binding site" evidence="4">
    <location>
        <position position="462"/>
    </location>
    <ligand>
        <name>Mg(2+)</name>
        <dbReference type="ChEBI" id="CHEBI:18420"/>
    </ligand>
</feature>
<feature type="binding site" evidence="4">
    <location>
        <position position="782"/>
    </location>
    <ligand>
        <name>Mg(2+)</name>
        <dbReference type="ChEBI" id="CHEBI:18420"/>
    </ligand>
</feature>
<feature type="modified residue" description="Phosphothreonine; by PKC" evidence="1">
    <location>
        <position position="1101"/>
    </location>
</feature>
<feature type="sequence conflict" description="In Ref. 2; AAK14839." evidence="8" ref="2">
    <original>S</original>
    <variation>L</variation>
    <location>
        <position position="1022"/>
    </location>
</feature>
<feature type="sequence conflict" description="In Ref. 2; AAK14839." evidence="8" ref="2">
    <original>R</original>
    <variation>H</variation>
    <location>
        <position position="1050"/>
    </location>
</feature>
<evidence type="ECO:0000250" key="1"/>
<evidence type="ECO:0000250" key="2">
    <source>
        <dbReference type="UniProtKB" id="G5E829"/>
    </source>
</evidence>
<evidence type="ECO:0000250" key="3">
    <source>
        <dbReference type="UniProtKB" id="P20020"/>
    </source>
</evidence>
<evidence type="ECO:0000250" key="4">
    <source>
        <dbReference type="UniProtKB" id="Q5ZWR1"/>
    </source>
</evidence>
<evidence type="ECO:0000255" key="5"/>
<evidence type="ECO:0000256" key="6">
    <source>
        <dbReference type="SAM" id="MobiDB-lite"/>
    </source>
</evidence>
<evidence type="ECO:0000269" key="7">
    <source>
    </source>
</evidence>
<evidence type="ECO:0000305" key="8"/>
<evidence type="ECO:0000312" key="9">
    <source>
        <dbReference type="EMBL" id="AAK14839.1"/>
    </source>
</evidence>
<dbReference type="EC" id="7.2.2.10" evidence="2"/>
<dbReference type="EMBL" id="AADN04000008">
    <property type="status" value="NOT_ANNOTATED_CDS"/>
    <property type="molecule type" value="Genomic_DNA"/>
</dbReference>
<dbReference type="EMBL" id="L08769">
    <property type="protein sequence ID" value="AAK14839.1"/>
    <property type="molecule type" value="mRNA"/>
</dbReference>
<dbReference type="PIR" id="A47276">
    <property type="entry name" value="A47276"/>
</dbReference>
<dbReference type="RefSeq" id="NP_001161474.1">
    <property type="nucleotide sequence ID" value="NM_001168002.3"/>
</dbReference>
<dbReference type="SMR" id="Q98SH2"/>
<dbReference type="FunCoup" id="Q98SH2">
    <property type="interactions" value="2261"/>
</dbReference>
<dbReference type="STRING" id="9031.ENSGALP00000057692"/>
<dbReference type="PaxDb" id="9031-ENSGALP00000018350"/>
<dbReference type="GeneID" id="374244"/>
<dbReference type="KEGG" id="gga:374244"/>
<dbReference type="CTD" id="490"/>
<dbReference type="VEuPathDB" id="HostDB:geneid_374244"/>
<dbReference type="InParanoid" id="Q98SH2"/>
<dbReference type="OrthoDB" id="116380at2759"/>
<dbReference type="PhylomeDB" id="Q98SH2"/>
<dbReference type="Reactome" id="R-GGA-418359">
    <property type="pathway name" value="Reduction of cytosolic Ca++ levels"/>
</dbReference>
<dbReference type="Reactome" id="R-GGA-5578775">
    <property type="pathway name" value="Ion homeostasis"/>
</dbReference>
<dbReference type="Reactome" id="R-GGA-936837">
    <property type="pathway name" value="Ion transport by P-type ATPases"/>
</dbReference>
<dbReference type="PRO" id="PR:Q98SH2"/>
<dbReference type="Proteomes" id="UP000000539">
    <property type="component" value="Chromosome 1"/>
</dbReference>
<dbReference type="Bgee" id="ENSGALG00000030550">
    <property type="expression patterns" value="Expressed in brain and 13 other cell types or tissues"/>
</dbReference>
<dbReference type="GO" id="GO:0043231">
    <property type="term" value="C:intracellular membrane-bounded organelle"/>
    <property type="evidence" value="ECO:0000318"/>
    <property type="project" value="GO_Central"/>
</dbReference>
<dbReference type="GO" id="GO:0005886">
    <property type="term" value="C:plasma membrane"/>
    <property type="evidence" value="ECO:0000318"/>
    <property type="project" value="GO_Central"/>
</dbReference>
<dbReference type="GO" id="GO:0005524">
    <property type="term" value="F:ATP binding"/>
    <property type="evidence" value="ECO:0007669"/>
    <property type="project" value="UniProtKB-KW"/>
</dbReference>
<dbReference type="GO" id="GO:0016887">
    <property type="term" value="F:ATP hydrolysis activity"/>
    <property type="evidence" value="ECO:0000250"/>
    <property type="project" value="UniProtKB"/>
</dbReference>
<dbReference type="GO" id="GO:0005516">
    <property type="term" value="F:calmodulin binding"/>
    <property type="evidence" value="ECO:0007669"/>
    <property type="project" value="UniProtKB-KW"/>
</dbReference>
<dbReference type="GO" id="GO:0046872">
    <property type="term" value="F:metal ion binding"/>
    <property type="evidence" value="ECO:0007669"/>
    <property type="project" value="UniProtKB-KW"/>
</dbReference>
<dbReference type="GO" id="GO:0005388">
    <property type="term" value="F:P-type calcium transporter activity"/>
    <property type="evidence" value="ECO:0000318"/>
    <property type="project" value="GO_Central"/>
</dbReference>
<dbReference type="GO" id="GO:0051480">
    <property type="term" value="P:regulation of cytosolic calcium ion concentration"/>
    <property type="evidence" value="ECO:0000250"/>
    <property type="project" value="UniProtKB"/>
</dbReference>
<dbReference type="CDD" id="cd02081">
    <property type="entry name" value="P-type_ATPase_Ca_PMCA-like"/>
    <property type="match status" value="1"/>
</dbReference>
<dbReference type="FunFam" id="1.20.1110.10:FF:000001">
    <property type="entry name" value="Calcium-transporting ATPase"/>
    <property type="match status" value="1"/>
</dbReference>
<dbReference type="FunFam" id="1.20.1110.10:FF:000002">
    <property type="entry name" value="Calcium-transporting ATPase"/>
    <property type="match status" value="1"/>
</dbReference>
<dbReference type="FunFam" id="1.20.1110.10:FF:000008">
    <property type="entry name" value="Calcium-transporting ATPase"/>
    <property type="match status" value="1"/>
</dbReference>
<dbReference type="FunFam" id="2.70.150.10:FF:000001">
    <property type="entry name" value="Calcium-transporting ATPase"/>
    <property type="match status" value="1"/>
</dbReference>
<dbReference type="FunFam" id="3.40.1110.10:FF:000002">
    <property type="entry name" value="Calcium-transporting ATPase"/>
    <property type="match status" value="1"/>
</dbReference>
<dbReference type="FunFam" id="3.40.50.1000:FF:000007">
    <property type="entry name" value="Calcium-transporting ATPase"/>
    <property type="match status" value="1"/>
</dbReference>
<dbReference type="Gene3D" id="3.40.1110.10">
    <property type="entry name" value="Calcium-transporting ATPase, cytoplasmic domain N"/>
    <property type="match status" value="1"/>
</dbReference>
<dbReference type="Gene3D" id="2.70.150.10">
    <property type="entry name" value="Calcium-transporting ATPase, cytoplasmic transduction domain A"/>
    <property type="match status" value="1"/>
</dbReference>
<dbReference type="Gene3D" id="1.20.1110.10">
    <property type="entry name" value="Calcium-transporting ATPase, transmembrane domain"/>
    <property type="match status" value="3"/>
</dbReference>
<dbReference type="Gene3D" id="3.40.50.1000">
    <property type="entry name" value="HAD superfamily/HAD-like"/>
    <property type="match status" value="1"/>
</dbReference>
<dbReference type="InterPro" id="IPR022141">
    <property type="entry name" value="ATP_Ca_trans_C"/>
</dbReference>
<dbReference type="InterPro" id="IPR006068">
    <property type="entry name" value="ATPase_P-typ_cation-transptr_C"/>
</dbReference>
<dbReference type="InterPro" id="IPR004014">
    <property type="entry name" value="ATPase_P-typ_cation-transptr_N"/>
</dbReference>
<dbReference type="InterPro" id="IPR023299">
    <property type="entry name" value="ATPase_P-typ_cyto_dom_N"/>
</dbReference>
<dbReference type="InterPro" id="IPR018303">
    <property type="entry name" value="ATPase_P-typ_P_site"/>
</dbReference>
<dbReference type="InterPro" id="IPR023298">
    <property type="entry name" value="ATPase_P-typ_TM_dom_sf"/>
</dbReference>
<dbReference type="InterPro" id="IPR008250">
    <property type="entry name" value="ATPase_P-typ_transduc_dom_A_sf"/>
</dbReference>
<dbReference type="InterPro" id="IPR036412">
    <property type="entry name" value="HAD-like_sf"/>
</dbReference>
<dbReference type="InterPro" id="IPR023214">
    <property type="entry name" value="HAD_sf"/>
</dbReference>
<dbReference type="InterPro" id="IPR006408">
    <property type="entry name" value="P-type_ATPase_IIB"/>
</dbReference>
<dbReference type="InterPro" id="IPR001757">
    <property type="entry name" value="P_typ_ATPase"/>
</dbReference>
<dbReference type="InterPro" id="IPR044492">
    <property type="entry name" value="P_typ_ATPase_HD_dom"/>
</dbReference>
<dbReference type="NCBIfam" id="TIGR01517">
    <property type="entry name" value="ATPase-IIB_Ca"/>
    <property type="match status" value="1"/>
</dbReference>
<dbReference type="NCBIfam" id="TIGR01494">
    <property type="entry name" value="ATPase_P-type"/>
    <property type="match status" value="3"/>
</dbReference>
<dbReference type="PANTHER" id="PTHR24093">
    <property type="entry name" value="CATION TRANSPORTING ATPASE"/>
    <property type="match status" value="1"/>
</dbReference>
<dbReference type="PANTHER" id="PTHR24093:SF245">
    <property type="entry name" value="PLASMA MEMBRANE CALCIUM-TRANSPORTING ATPASE 1"/>
    <property type="match status" value="1"/>
</dbReference>
<dbReference type="Pfam" id="PF12424">
    <property type="entry name" value="ATP_Ca_trans_C"/>
    <property type="match status" value="1"/>
</dbReference>
<dbReference type="Pfam" id="PF13246">
    <property type="entry name" value="Cation_ATPase"/>
    <property type="match status" value="1"/>
</dbReference>
<dbReference type="Pfam" id="PF00689">
    <property type="entry name" value="Cation_ATPase_C"/>
    <property type="match status" value="1"/>
</dbReference>
<dbReference type="Pfam" id="PF00690">
    <property type="entry name" value="Cation_ATPase_N"/>
    <property type="match status" value="1"/>
</dbReference>
<dbReference type="Pfam" id="PF00122">
    <property type="entry name" value="E1-E2_ATPase"/>
    <property type="match status" value="2"/>
</dbReference>
<dbReference type="Pfam" id="PF00702">
    <property type="entry name" value="Hydrolase"/>
    <property type="match status" value="1"/>
</dbReference>
<dbReference type="PRINTS" id="PR00119">
    <property type="entry name" value="CATATPASE"/>
</dbReference>
<dbReference type="SFLD" id="SFLDS00003">
    <property type="entry name" value="Haloacid_Dehalogenase"/>
    <property type="match status" value="1"/>
</dbReference>
<dbReference type="SFLD" id="SFLDF00027">
    <property type="entry name" value="p-type_atpase"/>
    <property type="match status" value="1"/>
</dbReference>
<dbReference type="SMART" id="SM00831">
    <property type="entry name" value="Cation_ATPase_N"/>
    <property type="match status" value="1"/>
</dbReference>
<dbReference type="SUPFAM" id="SSF81653">
    <property type="entry name" value="Calcium ATPase, transduction domain A"/>
    <property type="match status" value="1"/>
</dbReference>
<dbReference type="SUPFAM" id="SSF81665">
    <property type="entry name" value="Calcium ATPase, transmembrane domain M"/>
    <property type="match status" value="1"/>
</dbReference>
<dbReference type="SUPFAM" id="SSF56784">
    <property type="entry name" value="HAD-like"/>
    <property type="match status" value="1"/>
</dbReference>
<dbReference type="SUPFAM" id="SSF81660">
    <property type="entry name" value="Metal cation-transporting ATPase, ATP-binding domain N"/>
    <property type="match status" value="1"/>
</dbReference>
<dbReference type="PROSITE" id="PS00154">
    <property type="entry name" value="ATPASE_E1_E2"/>
    <property type="match status" value="1"/>
</dbReference>
<accession>Q98SH2</accession>
<accession>A0A1D5PSV8</accession>
<accession>Q9PSK0</accession>
<comment type="function">
    <text evidence="2">Catalyzes the hydrolysis of ATP coupled with the transport of calcium from the cytoplasm to the extracellular space thereby maintaining intracellular calcium homeostasis.</text>
</comment>
<comment type="catalytic activity">
    <reaction evidence="2">
        <text>Ca(2+)(in) + ATP + H2O = Ca(2+)(out) + ADP + phosphate + H(+)</text>
        <dbReference type="Rhea" id="RHEA:18105"/>
        <dbReference type="ChEBI" id="CHEBI:15377"/>
        <dbReference type="ChEBI" id="CHEBI:15378"/>
        <dbReference type="ChEBI" id="CHEBI:29108"/>
        <dbReference type="ChEBI" id="CHEBI:30616"/>
        <dbReference type="ChEBI" id="CHEBI:43474"/>
        <dbReference type="ChEBI" id="CHEBI:456216"/>
        <dbReference type="EC" id="7.2.2.10"/>
    </reaction>
</comment>
<comment type="subcellular location">
    <subcellularLocation>
        <location evidence="3">Cell membrane</location>
        <topology evidence="1">Multi-pass membrane protein</topology>
    </subcellularLocation>
</comment>
<comment type="induction">
    <text evidence="7">By vitamin D and 1,25-dihydroxyvitamin D3, and by calcium and phosphorous deficiency.</text>
</comment>
<comment type="similarity">
    <text evidence="8">Belongs to the cation transport ATPase (P-type) (TC 3.A.3) family. Type IIB subfamily.</text>
</comment>
<gene>
    <name evidence="3" type="primary">ATP2B1</name>
    <name type="synonym">PMCA1</name>
</gene>
<reference key="1">
    <citation type="journal article" date="2004" name="Nature">
        <title>Sequence and comparative analysis of the chicken genome provide unique perspectives on vertebrate evolution.</title>
        <authorList>
            <person name="Hillier L.W."/>
            <person name="Miller W."/>
            <person name="Birney E."/>
            <person name="Warren W."/>
            <person name="Hardison R.C."/>
            <person name="Ponting C.P."/>
            <person name="Bork P."/>
            <person name="Burt D.W."/>
            <person name="Groenen M.A.M."/>
            <person name="Delany M.E."/>
            <person name="Dodgson J.B."/>
            <person name="Chinwalla A.T."/>
            <person name="Cliften P.F."/>
            <person name="Clifton S.W."/>
            <person name="Delehaunty K.D."/>
            <person name="Fronick C."/>
            <person name="Fulton R.S."/>
            <person name="Graves T.A."/>
            <person name="Kremitzki C."/>
            <person name="Layman D."/>
            <person name="Magrini V."/>
            <person name="McPherson J.D."/>
            <person name="Miner T.L."/>
            <person name="Minx P."/>
            <person name="Nash W.E."/>
            <person name="Nhan M.N."/>
            <person name="Nelson J.O."/>
            <person name="Oddy L.G."/>
            <person name="Pohl C.S."/>
            <person name="Randall-Maher J."/>
            <person name="Smith S.M."/>
            <person name="Wallis J.W."/>
            <person name="Yang S.-P."/>
            <person name="Romanov M.N."/>
            <person name="Rondelli C.M."/>
            <person name="Paton B."/>
            <person name="Smith J."/>
            <person name="Morrice D."/>
            <person name="Daniels L."/>
            <person name="Tempest H.G."/>
            <person name="Robertson L."/>
            <person name="Masabanda J.S."/>
            <person name="Griffin D.K."/>
            <person name="Vignal A."/>
            <person name="Fillon V."/>
            <person name="Jacobbson L."/>
            <person name="Kerje S."/>
            <person name="Andersson L."/>
            <person name="Crooijmans R.P."/>
            <person name="Aerts J."/>
            <person name="van der Poel J.J."/>
            <person name="Ellegren H."/>
            <person name="Caldwell R.B."/>
            <person name="Hubbard S.J."/>
            <person name="Grafham D.V."/>
            <person name="Kierzek A.M."/>
            <person name="McLaren S.R."/>
            <person name="Overton I.M."/>
            <person name="Arakawa H."/>
            <person name="Beattie K.J."/>
            <person name="Bezzubov Y."/>
            <person name="Boardman P.E."/>
            <person name="Bonfield J.K."/>
            <person name="Croning M.D.R."/>
            <person name="Davies R.M."/>
            <person name="Francis M.D."/>
            <person name="Humphray S.J."/>
            <person name="Scott C.E."/>
            <person name="Taylor R.G."/>
            <person name="Tickle C."/>
            <person name="Brown W.R.A."/>
            <person name="Rogers J."/>
            <person name="Buerstedde J.-M."/>
            <person name="Wilson S.A."/>
            <person name="Stubbs L."/>
            <person name="Ovcharenko I."/>
            <person name="Gordon L."/>
            <person name="Lucas S."/>
            <person name="Miller M.M."/>
            <person name="Inoko H."/>
            <person name="Shiina T."/>
            <person name="Kaufman J."/>
            <person name="Salomonsen J."/>
            <person name="Skjoedt K."/>
            <person name="Wong G.K.-S."/>
            <person name="Wang J."/>
            <person name="Liu B."/>
            <person name="Wang J."/>
            <person name="Yu J."/>
            <person name="Yang H."/>
            <person name="Nefedov M."/>
            <person name="Koriabine M."/>
            <person name="Dejong P.J."/>
            <person name="Goodstadt L."/>
            <person name="Webber C."/>
            <person name="Dickens N.J."/>
            <person name="Letunic I."/>
            <person name="Suyama M."/>
            <person name="Torrents D."/>
            <person name="von Mering C."/>
            <person name="Zdobnov E.M."/>
            <person name="Makova K."/>
            <person name="Nekrutenko A."/>
            <person name="Elnitski L."/>
            <person name="Eswara P."/>
            <person name="King D.C."/>
            <person name="Yang S.-P."/>
            <person name="Tyekucheva S."/>
            <person name="Radakrishnan A."/>
            <person name="Harris R.S."/>
            <person name="Chiaromonte F."/>
            <person name="Taylor J."/>
            <person name="He J."/>
            <person name="Rijnkels M."/>
            <person name="Griffiths-Jones S."/>
            <person name="Ureta-Vidal A."/>
            <person name="Hoffman M.M."/>
            <person name="Severin J."/>
            <person name="Searle S.M.J."/>
            <person name="Law A.S."/>
            <person name="Speed D."/>
            <person name="Waddington D."/>
            <person name="Cheng Z."/>
            <person name="Tuzun E."/>
            <person name="Eichler E."/>
            <person name="Bao Z."/>
            <person name="Flicek P."/>
            <person name="Shteynberg D.D."/>
            <person name="Brent M.R."/>
            <person name="Bye J.M."/>
            <person name="Huckle E.J."/>
            <person name="Chatterji S."/>
            <person name="Dewey C."/>
            <person name="Pachter L."/>
            <person name="Kouranov A."/>
            <person name="Mourelatos Z."/>
            <person name="Hatzigeorgiou A.G."/>
            <person name="Paterson A.H."/>
            <person name="Ivarie R."/>
            <person name="Brandstrom M."/>
            <person name="Axelsson E."/>
            <person name="Backstrom N."/>
            <person name="Berlin S."/>
            <person name="Webster M.T."/>
            <person name="Pourquie O."/>
            <person name="Reymond A."/>
            <person name="Ucla C."/>
            <person name="Antonarakis S.E."/>
            <person name="Long M."/>
            <person name="Emerson J.J."/>
            <person name="Betran E."/>
            <person name="Dupanloup I."/>
            <person name="Kaessmann H."/>
            <person name="Hinrichs A.S."/>
            <person name="Bejerano G."/>
            <person name="Furey T.S."/>
            <person name="Harte R.A."/>
            <person name="Raney B."/>
            <person name="Siepel A."/>
            <person name="Kent W.J."/>
            <person name="Haussler D."/>
            <person name="Eyras E."/>
            <person name="Castelo R."/>
            <person name="Abril J.F."/>
            <person name="Castellano S."/>
            <person name="Camara F."/>
            <person name="Parra G."/>
            <person name="Guigo R."/>
            <person name="Bourque G."/>
            <person name="Tesler G."/>
            <person name="Pevzner P.A."/>
            <person name="Smit A."/>
            <person name="Fulton L.A."/>
            <person name="Mardis E.R."/>
            <person name="Wilson R.K."/>
        </authorList>
    </citation>
    <scope>NUCLEOTIDE SEQUENCE [LARGE SCALE GENOMIC DNA]</scope>
    <source>
        <strain>Red jungle fowl</strain>
    </source>
</reference>
<reference evidence="8" key="2">
    <citation type="journal article" date="1993" name="Proc. Natl. Acad. Sci. U.S.A.">
        <title>Vitamin D and adaptation to dietary calcium and phosphate deficiencies increase intestinal plasma membrane calcium pump gene expression.</title>
        <authorList>
            <person name="Cai Q."/>
            <person name="Chandler J.S."/>
            <person name="Wasserman R.H."/>
            <person name="Kumar R."/>
            <person name="Penniston J.T."/>
        </authorList>
    </citation>
    <scope>NUCLEOTIDE SEQUENCE [MRNA] OF 992-1205</scope>
    <scope>INDUCTION</scope>
    <source>
        <strain>White leghorn</strain>
        <tissue>Intestine</tissue>
    </source>
</reference>
<sequence length="1205" mass="133019">MGDMANNSVAYSGVKNAVKEANHGEFGVTLAELRSLMELRATDALHKIQECYGDVQGICTKLKTSPNEGLSGNPADIERREAVFGKNFIPPKKPKTFLQLVWEALQDVTLIILEIAAVVSLGLSFYQPPGGNEALCGSVNVGEEEEESEAGWIEGAAILLSVVCVVLVTAFNDWSKEKQFRGLQSRIEQEQKFTVIRGGQVIQIPVADIIVGDIAQVKYGDLLPADGILIQGNDLKIDESSLTGESDHVKKSLDRDPMLLSGTHVMEGSGRMVVTAVGVNSQTGIIFTLLGAGGDEEEKEKEKKDKKTKAQDGAAMEMQPLKSEDGVDGDEKDKKRSNLPKKEKSVLQGKLTKLAVQIGKAGLLMSAITVIILVLYFVIDTSWVQKRPWLAECTPIYIQYFVKFFIIGVTVLVVAVPEGLPLAVTISLAYSVKKMMRDNNLVRHLDACETMGNATAICSDKTGTLTMNRMTVVQAYISEKHYKKIPAPEAIPENIMAYLVTGISVNCAYTSKILPPEKEGGLPRHVGNKTECALLGFLLDLKRDYQDVRNEIPEEKLHKVYTFNSVRKSMSTVLKNSDGSFRIFSKGASEIVLKKCFKILSADGEPKVFRPRDRDDIVKTVIEPMASEGLRTICLAFRDFPAGEPEPEWDNENDIVTGLTCIAVVGIEDPVRPEVPDAIKKCQRAGITVRMVTGDNINTARAIALKCGILNPGEDFLCLEGKDFNRRIRNEKGEIEQERIDKIWPKLRVLARSSPTDKHTLVKGIIDSTIFDQRQVVAVTGDGTNDGPALKKADVGFAMGIAGTDVAKEASDIILTDDNFTSIVKAVMWGRNVYDSISKFLQFQLTVNVVAVIVAFTGACITQDSPLKAVQMLWVNLIMDTLASLALATEPPTEALLLRKPYGRNKPLISRTMMKNILGHAFYQLVVVFTLLFAGEKIFDIDSGRNAPLHAPPSEHYTIVFNTFVMMQLFNEINARKIHGERNVFEGIFNNAIFCTIVLGTFVVQIIIVQFGGKPFSCSKLSIEQWLWSVFLGMGTLLWGQLISTIPTSRLKFLKEAGHGTQKEEIPEEELAEDVEEIDHAERELRRGQILWFRGLNRIQTQIRVVNAFRSSLYEGLEKPETRSSIHNFMTHPEFRIEDSEPHIPLIDDTDAEDDAPTKRNSTPPPSPNKNNNAVDSGIHLTTDMNKSATSSSPGSPLHSLETSL</sequence>
<name>AT2B1_CHICK</name>